<organism>
    <name type="scientific">Shewanella sp. (strain MR-7)</name>
    <dbReference type="NCBI Taxonomy" id="60481"/>
    <lineage>
        <taxon>Bacteria</taxon>
        <taxon>Pseudomonadati</taxon>
        <taxon>Pseudomonadota</taxon>
        <taxon>Gammaproteobacteria</taxon>
        <taxon>Alteromonadales</taxon>
        <taxon>Shewanellaceae</taxon>
        <taxon>Shewanella</taxon>
    </lineage>
</organism>
<evidence type="ECO:0000255" key="1">
    <source>
        <dbReference type="HAMAP-Rule" id="MF_00071"/>
    </source>
</evidence>
<reference key="1">
    <citation type="submission" date="2006-08" db="EMBL/GenBank/DDBJ databases">
        <title>Complete sequence of chromosome 1 of Shewanella sp. MR-7.</title>
        <authorList>
            <person name="Copeland A."/>
            <person name="Lucas S."/>
            <person name="Lapidus A."/>
            <person name="Barry K."/>
            <person name="Detter J.C."/>
            <person name="Glavina del Rio T."/>
            <person name="Hammon N."/>
            <person name="Israni S."/>
            <person name="Dalin E."/>
            <person name="Tice H."/>
            <person name="Pitluck S."/>
            <person name="Kiss H."/>
            <person name="Brettin T."/>
            <person name="Bruce D."/>
            <person name="Han C."/>
            <person name="Tapia R."/>
            <person name="Gilna P."/>
            <person name="Schmutz J."/>
            <person name="Larimer F."/>
            <person name="Land M."/>
            <person name="Hauser L."/>
            <person name="Kyrpides N."/>
            <person name="Mikhailova N."/>
            <person name="Nealson K."/>
            <person name="Konstantinidis K."/>
            <person name="Klappenbach J."/>
            <person name="Tiedje J."/>
            <person name="Richardson P."/>
        </authorList>
    </citation>
    <scope>NUCLEOTIDE SEQUENCE [LARGE SCALE GENOMIC DNA]</scope>
    <source>
        <strain>MR-7</strain>
    </source>
</reference>
<gene>
    <name evidence="1" type="primary">lepA</name>
    <name type="ordered locus">Shewmr7_2932</name>
</gene>
<comment type="function">
    <text evidence="1">Required for accurate and efficient protein synthesis under certain stress conditions. May act as a fidelity factor of the translation reaction, by catalyzing a one-codon backward translocation of tRNAs on improperly translocated ribosomes. Back-translocation proceeds from a post-translocation (POST) complex to a pre-translocation (PRE) complex, thus giving elongation factor G a second chance to translocate the tRNAs correctly. Binds to ribosomes in a GTP-dependent manner.</text>
</comment>
<comment type="catalytic activity">
    <reaction evidence="1">
        <text>GTP + H2O = GDP + phosphate + H(+)</text>
        <dbReference type="Rhea" id="RHEA:19669"/>
        <dbReference type="ChEBI" id="CHEBI:15377"/>
        <dbReference type="ChEBI" id="CHEBI:15378"/>
        <dbReference type="ChEBI" id="CHEBI:37565"/>
        <dbReference type="ChEBI" id="CHEBI:43474"/>
        <dbReference type="ChEBI" id="CHEBI:58189"/>
        <dbReference type="EC" id="3.6.5.n1"/>
    </reaction>
</comment>
<comment type="subcellular location">
    <subcellularLocation>
        <location evidence="1">Cell inner membrane</location>
        <topology evidence="1">Peripheral membrane protein</topology>
        <orientation evidence="1">Cytoplasmic side</orientation>
    </subcellularLocation>
</comment>
<comment type="similarity">
    <text evidence="1">Belongs to the TRAFAC class translation factor GTPase superfamily. Classic translation factor GTPase family. LepA subfamily.</text>
</comment>
<keyword id="KW-0997">Cell inner membrane</keyword>
<keyword id="KW-1003">Cell membrane</keyword>
<keyword id="KW-0342">GTP-binding</keyword>
<keyword id="KW-0378">Hydrolase</keyword>
<keyword id="KW-0472">Membrane</keyword>
<keyword id="KW-0547">Nucleotide-binding</keyword>
<keyword id="KW-0648">Protein biosynthesis</keyword>
<dbReference type="EC" id="3.6.5.n1" evidence="1"/>
<dbReference type="EMBL" id="CP000444">
    <property type="protein sequence ID" value="ABI43916.1"/>
    <property type="molecule type" value="Genomic_DNA"/>
</dbReference>
<dbReference type="SMR" id="Q0HSI9"/>
<dbReference type="KEGG" id="shm:Shewmr7_2932"/>
<dbReference type="HOGENOM" id="CLU_009995_3_3_6"/>
<dbReference type="GO" id="GO:0005886">
    <property type="term" value="C:plasma membrane"/>
    <property type="evidence" value="ECO:0007669"/>
    <property type="project" value="UniProtKB-SubCell"/>
</dbReference>
<dbReference type="GO" id="GO:0005525">
    <property type="term" value="F:GTP binding"/>
    <property type="evidence" value="ECO:0007669"/>
    <property type="project" value="UniProtKB-UniRule"/>
</dbReference>
<dbReference type="GO" id="GO:0003924">
    <property type="term" value="F:GTPase activity"/>
    <property type="evidence" value="ECO:0007669"/>
    <property type="project" value="UniProtKB-UniRule"/>
</dbReference>
<dbReference type="GO" id="GO:0097216">
    <property type="term" value="F:guanosine tetraphosphate binding"/>
    <property type="evidence" value="ECO:0007669"/>
    <property type="project" value="UniProtKB-ARBA"/>
</dbReference>
<dbReference type="GO" id="GO:0043022">
    <property type="term" value="F:ribosome binding"/>
    <property type="evidence" value="ECO:0007669"/>
    <property type="project" value="UniProtKB-UniRule"/>
</dbReference>
<dbReference type="GO" id="GO:0003746">
    <property type="term" value="F:translation elongation factor activity"/>
    <property type="evidence" value="ECO:0007669"/>
    <property type="project" value="UniProtKB-UniRule"/>
</dbReference>
<dbReference type="GO" id="GO:0045727">
    <property type="term" value="P:positive regulation of translation"/>
    <property type="evidence" value="ECO:0007669"/>
    <property type="project" value="UniProtKB-UniRule"/>
</dbReference>
<dbReference type="CDD" id="cd03699">
    <property type="entry name" value="EF4_II"/>
    <property type="match status" value="1"/>
</dbReference>
<dbReference type="CDD" id="cd16260">
    <property type="entry name" value="EF4_III"/>
    <property type="match status" value="1"/>
</dbReference>
<dbReference type="CDD" id="cd01890">
    <property type="entry name" value="LepA"/>
    <property type="match status" value="1"/>
</dbReference>
<dbReference type="CDD" id="cd03709">
    <property type="entry name" value="lepA_C"/>
    <property type="match status" value="1"/>
</dbReference>
<dbReference type="FunFam" id="3.40.50.300:FF:000078">
    <property type="entry name" value="Elongation factor 4"/>
    <property type="match status" value="1"/>
</dbReference>
<dbReference type="FunFam" id="2.40.30.10:FF:000015">
    <property type="entry name" value="Translation factor GUF1, mitochondrial"/>
    <property type="match status" value="1"/>
</dbReference>
<dbReference type="FunFam" id="3.30.70.240:FF:000007">
    <property type="entry name" value="Translation factor GUF1, mitochondrial"/>
    <property type="match status" value="1"/>
</dbReference>
<dbReference type="FunFam" id="3.30.70.2570:FF:000001">
    <property type="entry name" value="Translation factor GUF1, mitochondrial"/>
    <property type="match status" value="1"/>
</dbReference>
<dbReference type="FunFam" id="3.30.70.870:FF:000004">
    <property type="entry name" value="Translation factor GUF1, mitochondrial"/>
    <property type="match status" value="1"/>
</dbReference>
<dbReference type="Gene3D" id="3.30.70.240">
    <property type="match status" value="1"/>
</dbReference>
<dbReference type="Gene3D" id="3.30.70.2570">
    <property type="entry name" value="Elongation factor 4, C-terminal domain"/>
    <property type="match status" value="1"/>
</dbReference>
<dbReference type="Gene3D" id="3.30.70.870">
    <property type="entry name" value="Elongation Factor G (Translational Gtpase), domain 3"/>
    <property type="match status" value="1"/>
</dbReference>
<dbReference type="Gene3D" id="3.40.50.300">
    <property type="entry name" value="P-loop containing nucleotide triphosphate hydrolases"/>
    <property type="match status" value="1"/>
</dbReference>
<dbReference type="Gene3D" id="2.40.30.10">
    <property type="entry name" value="Translation factors"/>
    <property type="match status" value="1"/>
</dbReference>
<dbReference type="HAMAP" id="MF_00071">
    <property type="entry name" value="LepA"/>
    <property type="match status" value="1"/>
</dbReference>
<dbReference type="InterPro" id="IPR006297">
    <property type="entry name" value="EF-4"/>
</dbReference>
<dbReference type="InterPro" id="IPR035647">
    <property type="entry name" value="EFG_III/V"/>
</dbReference>
<dbReference type="InterPro" id="IPR000640">
    <property type="entry name" value="EFG_V-like"/>
</dbReference>
<dbReference type="InterPro" id="IPR004161">
    <property type="entry name" value="EFTu-like_2"/>
</dbReference>
<dbReference type="InterPro" id="IPR031157">
    <property type="entry name" value="G_TR_CS"/>
</dbReference>
<dbReference type="InterPro" id="IPR038363">
    <property type="entry name" value="LepA_C_sf"/>
</dbReference>
<dbReference type="InterPro" id="IPR013842">
    <property type="entry name" value="LepA_CTD"/>
</dbReference>
<dbReference type="InterPro" id="IPR035654">
    <property type="entry name" value="LepA_IV"/>
</dbReference>
<dbReference type="InterPro" id="IPR027417">
    <property type="entry name" value="P-loop_NTPase"/>
</dbReference>
<dbReference type="InterPro" id="IPR005225">
    <property type="entry name" value="Small_GTP-bd"/>
</dbReference>
<dbReference type="InterPro" id="IPR000795">
    <property type="entry name" value="T_Tr_GTP-bd_dom"/>
</dbReference>
<dbReference type="NCBIfam" id="TIGR01393">
    <property type="entry name" value="lepA"/>
    <property type="match status" value="1"/>
</dbReference>
<dbReference type="NCBIfam" id="TIGR00231">
    <property type="entry name" value="small_GTP"/>
    <property type="match status" value="1"/>
</dbReference>
<dbReference type="PANTHER" id="PTHR43512:SF4">
    <property type="entry name" value="TRANSLATION FACTOR GUF1 HOMOLOG, CHLOROPLASTIC"/>
    <property type="match status" value="1"/>
</dbReference>
<dbReference type="PANTHER" id="PTHR43512">
    <property type="entry name" value="TRANSLATION FACTOR GUF1-RELATED"/>
    <property type="match status" value="1"/>
</dbReference>
<dbReference type="Pfam" id="PF00679">
    <property type="entry name" value="EFG_C"/>
    <property type="match status" value="1"/>
</dbReference>
<dbReference type="Pfam" id="PF00009">
    <property type="entry name" value="GTP_EFTU"/>
    <property type="match status" value="1"/>
</dbReference>
<dbReference type="Pfam" id="PF03144">
    <property type="entry name" value="GTP_EFTU_D2"/>
    <property type="match status" value="1"/>
</dbReference>
<dbReference type="Pfam" id="PF06421">
    <property type="entry name" value="LepA_C"/>
    <property type="match status" value="1"/>
</dbReference>
<dbReference type="PRINTS" id="PR00315">
    <property type="entry name" value="ELONGATNFCT"/>
</dbReference>
<dbReference type="SMART" id="SM00838">
    <property type="entry name" value="EFG_C"/>
    <property type="match status" value="1"/>
</dbReference>
<dbReference type="SUPFAM" id="SSF54980">
    <property type="entry name" value="EF-G C-terminal domain-like"/>
    <property type="match status" value="2"/>
</dbReference>
<dbReference type="SUPFAM" id="SSF52540">
    <property type="entry name" value="P-loop containing nucleoside triphosphate hydrolases"/>
    <property type="match status" value="1"/>
</dbReference>
<dbReference type="PROSITE" id="PS00301">
    <property type="entry name" value="G_TR_1"/>
    <property type="match status" value="1"/>
</dbReference>
<dbReference type="PROSITE" id="PS51722">
    <property type="entry name" value="G_TR_2"/>
    <property type="match status" value="1"/>
</dbReference>
<name>LEPA_SHESR</name>
<protein>
    <recommendedName>
        <fullName evidence="1">Elongation factor 4</fullName>
        <shortName evidence="1">EF-4</shortName>
        <ecNumber evidence="1">3.6.5.n1</ecNumber>
    </recommendedName>
    <alternativeName>
        <fullName evidence="1">Ribosomal back-translocase LepA</fullName>
    </alternativeName>
</protein>
<feature type="chain" id="PRO_0000265703" description="Elongation factor 4">
    <location>
        <begin position="1"/>
        <end position="596"/>
    </location>
</feature>
<feature type="domain" description="tr-type G">
    <location>
        <begin position="2"/>
        <end position="184"/>
    </location>
</feature>
<feature type="binding site" evidence="1">
    <location>
        <begin position="14"/>
        <end position="19"/>
    </location>
    <ligand>
        <name>GTP</name>
        <dbReference type="ChEBI" id="CHEBI:37565"/>
    </ligand>
</feature>
<feature type="binding site" evidence="1">
    <location>
        <begin position="131"/>
        <end position="134"/>
    </location>
    <ligand>
        <name>GTP</name>
        <dbReference type="ChEBI" id="CHEBI:37565"/>
    </ligand>
</feature>
<proteinExistence type="inferred from homology"/>
<accession>Q0HSI9</accession>
<sequence length="596" mass="65971">MKHIRNFSIIAHIDHGKSTLSDRLIQVCGGLSDREMDAQVLDSMDLERERGITIKAQSVTLEYKAKNGETYQLNFIDTPGHVDFSYEVSRSLAACEGALLVVDAGQGVEAQTLANCYTALDMNLDVVPILNKIDLPQADPERVAAEIEDIVGIDAMNAVRCSAKTGVGIDEVLEVIVEQIPPPEGDPEAPLQALIIDSWFDSYLGVVSLVRIKNGVLKKGDKFKVMSTGQNHTADRVGIFTPKQTDKTELKTGEVGFVIAGIKEIHGAPVGDTLTLAKHGAEKPLPGFKKVKPQVYAGVFPISTDEYENFRDALNKLSLNDASLFFEPESSSALGFGFRIGYLGLLHMEIIQERLEREYDLDLITTAPTVVYEVLLTSGETVYVDNPADLPAINNIEEMREPIVEANILVPKEYLGNVITLCIEKRGTQVNMVYHGNQVAVTYHLPMAEVVMDFFDRLKSTSRGYASLEYNFIRFDPADMVRLDILINGDRVDALAMIIHRSNIRHRGLALVEKMKELIPRQMFDIAIQAAVGSQIIARSTVKALRKDVTAKCYGGDVSRKKKLLNKQKEGKKRMKQVGNVEVPQEAFLAVLKLNE</sequence>